<dbReference type="EMBL" id="U13254">
    <property type="protein sequence ID" value="AAA61541.1"/>
    <property type="molecule type" value="Genomic_DNA"/>
</dbReference>
<dbReference type="EMBL" id="Z33502">
    <property type="protein sequence ID" value="CAA83903.1"/>
    <property type="molecule type" value="Genomic_DNA"/>
</dbReference>
<dbReference type="PIR" id="S54430">
    <property type="entry name" value="S54430"/>
</dbReference>
<dbReference type="RefSeq" id="WP_077643806.1">
    <property type="nucleotide sequence ID" value="NZ_CP082856.1"/>
</dbReference>
<dbReference type="SMR" id="P45992"/>
<dbReference type="GO" id="GO:0009289">
    <property type="term" value="C:pilus"/>
    <property type="evidence" value="ECO:0007669"/>
    <property type="project" value="UniProtKB-SubCell"/>
</dbReference>
<dbReference type="GO" id="GO:0005886">
    <property type="term" value="C:plasma membrane"/>
    <property type="evidence" value="ECO:0007669"/>
    <property type="project" value="UniProtKB-SubCell"/>
</dbReference>
<dbReference type="GO" id="GO:0043709">
    <property type="term" value="P:cell adhesion involved in single-species biofilm formation"/>
    <property type="evidence" value="ECO:0007669"/>
    <property type="project" value="TreeGrafter"/>
</dbReference>
<dbReference type="Gene3D" id="2.60.40.1090">
    <property type="entry name" value="Fimbrial-type adhesion domain"/>
    <property type="match status" value="1"/>
</dbReference>
<dbReference type="InterPro" id="IPR000259">
    <property type="entry name" value="Adhesion_dom_fimbrial"/>
</dbReference>
<dbReference type="InterPro" id="IPR036937">
    <property type="entry name" value="Adhesion_dom_fimbrial_sf"/>
</dbReference>
<dbReference type="InterPro" id="IPR008966">
    <property type="entry name" value="Adhesion_dom_sf"/>
</dbReference>
<dbReference type="InterPro" id="IPR050263">
    <property type="entry name" value="Bact_Fimbrial_Adh_Pro"/>
</dbReference>
<dbReference type="PANTHER" id="PTHR33420:SF3">
    <property type="entry name" value="FIMBRIAL SUBUNIT ELFA"/>
    <property type="match status" value="1"/>
</dbReference>
<dbReference type="PANTHER" id="PTHR33420">
    <property type="entry name" value="FIMBRIAL SUBUNIT ELFA-RELATED"/>
    <property type="match status" value="1"/>
</dbReference>
<dbReference type="Pfam" id="PF00419">
    <property type="entry name" value="Fimbrial"/>
    <property type="match status" value="1"/>
</dbReference>
<dbReference type="SUPFAM" id="SSF49401">
    <property type="entry name" value="Bacterial adhesins"/>
    <property type="match status" value="1"/>
</dbReference>
<dbReference type="PROSITE" id="PS51257">
    <property type="entry name" value="PROKAR_LIPOPROTEIN"/>
    <property type="match status" value="1"/>
</dbReference>
<keyword id="KW-1003">Cell membrane</keyword>
<keyword id="KW-0281">Fimbrium</keyword>
<keyword id="KW-0449">Lipoprotein</keyword>
<keyword id="KW-0472">Membrane</keyword>
<keyword id="KW-0564">Palmitate</keyword>
<keyword id="KW-0732">Signal</keyword>
<proteinExistence type="inferred from homology"/>
<sequence length="216" mass="22582">MQKTPKKLTALCHQQSTASCSGSNYSGSNYSGSKCFRLHRLALLACIVALPAYAVDGRVTFQGEIVSDGTCKIETDSKNRTVTLPTVGKANLSLAGQTAAPVPFSITLKECNAADAKKANLLFSGAVTKGQLYLSNAASSGKANNVGIQIVKADGTGSPINVDGSQANSEKAPDTGKEQNSTVIQPRFDYFAHYYATGAATAGEVEATATFQVQYN</sequence>
<protein>
    <recommendedName>
        <fullName>Minor fimbrial subunit HifD</fullName>
    </recommendedName>
</protein>
<organism>
    <name type="scientific">Haemophilus influenzae</name>
    <dbReference type="NCBI Taxonomy" id="727"/>
    <lineage>
        <taxon>Bacteria</taxon>
        <taxon>Pseudomonadati</taxon>
        <taxon>Pseudomonadota</taxon>
        <taxon>Gammaproteobacteria</taxon>
        <taxon>Pasteurellales</taxon>
        <taxon>Pasteurellaceae</taxon>
        <taxon>Haemophilus</taxon>
    </lineage>
</organism>
<feature type="signal peptide" evidence="2">
    <location>
        <begin position="1"/>
        <end position="19"/>
    </location>
</feature>
<feature type="chain" id="PRO_0000009221" description="Minor fimbrial subunit HifD">
    <location>
        <begin position="20"/>
        <end position="216"/>
    </location>
</feature>
<feature type="region of interest" description="Disordered" evidence="1">
    <location>
        <begin position="159"/>
        <end position="180"/>
    </location>
</feature>
<feature type="lipid moiety-binding region" description="N-palmitoyl cysteine" evidence="2">
    <location>
        <position position="20"/>
    </location>
</feature>
<feature type="lipid moiety-binding region" description="S-diacylglycerol cysteine" evidence="2">
    <location>
        <position position="20"/>
    </location>
</feature>
<accession>P45992</accession>
<gene>
    <name type="primary">hifD</name>
</gene>
<name>HIFD1_HAEIF</name>
<comment type="function">
    <text>May be a minor structural protein required for pilus biogenesis.</text>
</comment>
<comment type="subcellular location">
    <subcellularLocation>
        <location evidence="2">Cell membrane</location>
        <topology evidence="2">Lipid-anchor</topology>
    </subcellularLocation>
    <subcellularLocation>
        <location>Fimbrium</location>
    </subcellularLocation>
</comment>
<comment type="similarity">
    <text evidence="2">Belongs to the fimbrial protein family.</text>
</comment>
<evidence type="ECO:0000256" key="1">
    <source>
        <dbReference type="SAM" id="MobiDB-lite"/>
    </source>
</evidence>
<evidence type="ECO:0000305" key="2"/>
<reference key="1">
    <citation type="journal article" date="1994" name="Infect. Immun.">
        <title>Identification of hifD and hifE in the pilus gene cluster of Haemophilus influenzae type b strain Eagan.</title>
        <authorList>
            <person name="McCrea K.W."/>
            <person name="Watson W.J."/>
            <person name="Gilsdorf J.R."/>
            <person name="Marrs C.F."/>
        </authorList>
    </citation>
    <scope>NUCLEOTIDE SEQUENCE [GENOMIC DNA]</scope>
    <source>
        <strain>Eagan / Serotype B</strain>
    </source>
</reference>
<reference key="2">
    <citation type="journal article" date="1994" name="Mol. Microbiol.">
        <title>The fimbrial gene cluster of Haemophilus influenzae type b.</title>
        <authorList>
            <person name="van Ham M.S."/>
            <person name="van Alphen L."/>
            <person name="Mooi F.R."/>
            <person name="van Putten J.P.M."/>
        </authorList>
    </citation>
    <scope>NUCLEOTIDE SEQUENCE [GENOMIC DNA]</scope>
    <source>
        <strain>AM30 (770235) / Serotype B</strain>
    </source>
</reference>